<comment type="function">
    <text evidence="1">Specifically methylates the pseudouridine at position 1915 (m3Psi1915) in 23S rRNA.</text>
</comment>
<comment type="catalytic activity">
    <reaction evidence="1">
        <text>pseudouridine(1915) in 23S rRNA + S-adenosyl-L-methionine = N(3)-methylpseudouridine(1915) in 23S rRNA + S-adenosyl-L-homocysteine + H(+)</text>
        <dbReference type="Rhea" id="RHEA:42752"/>
        <dbReference type="Rhea" id="RHEA-COMP:10221"/>
        <dbReference type="Rhea" id="RHEA-COMP:10222"/>
        <dbReference type="ChEBI" id="CHEBI:15378"/>
        <dbReference type="ChEBI" id="CHEBI:57856"/>
        <dbReference type="ChEBI" id="CHEBI:59789"/>
        <dbReference type="ChEBI" id="CHEBI:65314"/>
        <dbReference type="ChEBI" id="CHEBI:74486"/>
        <dbReference type="EC" id="2.1.1.177"/>
    </reaction>
</comment>
<comment type="subunit">
    <text evidence="1">Homodimer.</text>
</comment>
<comment type="subcellular location">
    <subcellularLocation>
        <location evidence="1">Cytoplasm</location>
    </subcellularLocation>
</comment>
<comment type="similarity">
    <text evidence="1">Belongs to the RNA methyltransferase RlmH family.</text>
</comment>
<gene>
    <name evidence="1" type="primary">rlmH</name>
    <name type="ordered locus">Syncc9605_1183</name>
</gene>
<feature type="chain" id="PRO_0000260623" description="Ribosomal RNA large subunit methyltransferase H">
    <location>
        <begin position="1"/>
        <end position="144"/>
    </location>
</feature>
<feature type="binding site" evidence="1">
    <location>
        <position position="63"/>
    </location>
    <ligand>
        <name>S-adenosyl-L-methionine</name>
        <dbReference type="ChEBI" id="CHEBI:59789"/>
    </ligand>
</feature>
<feature type="binding site" evidence="1">
    <location>
        <position position="92"/>
    </location>
    <ligand>
        <name>S-adenosyl-L-methionine</name>
        <dbReference type="ChEBI" id="CHEBI:59789"/>
    </ligand>
</feature>
<feature type="binding site" evidence="1">
    <location>
        <begin position="111"/>
        <end position="116"/>
    </location>
    <ligand>
        <name>S-adenosyl-L-methionine</name>
        <dbReference type="ChEBI" id="CHEBI:59789"/>
    </ligand>
</feature>
<dbReference type="EC" id="2.1.1.177" evidence="1"/>
<dbReference type="EMBL" id="CP000110">
    <property type="protein sequence ID" value="ABB34938.1"/>
    <property type="molecule type" value="Genomic_DNA"/>
</dbReference>
<dbReference type="RefSeq" id="WP_011364159.1">
    <property type="nucleotide sequence ID" value="NC_007516.1"/>
</dbReference>
<dbReference type="SMR" id="Q3AKE4"/>
<dbReference type="STRING" id="110662.Syncc9605_1183"/>
<dbReference type="KEGG" id="syd:Syncc9605_1183"/>
<dbReference type="eggNOG" id="COG1576">
    <property type="taxonomic scope" value="Bacteria"/>
</dbReference>
<dbReference type="HOGENOM" id="CLU_100552_1_0_3"/>
<dbReference type="OrthoDB" id="9806643at2"/>
<dbReference type="GO" id="GO:0005737">
    <property type="term" value="C:cytoplasm"/>
    <property type="evidence" value="ECO:0007669"/>
    <property type="project" value="UniProtKB-SubCell"/>
</dbReference>
<dbReference type="GO" id="GO:0070038">
    <property type="term" value="F:rRNA (pseudouridine-N3-)-methyltransferase activity"/>
    <property type="evidence" value="ECO:0007669"/>
    <property type="project" value="UniProtKB-UniRule"/>
</dbReference>
<dbReference type="CDD" id="cd18081">
    <property type="entry name" value="RlmH-like"/>
    <property type="match status" value="1"/>
</dbReference>
<dbReference type="Gene3D" id="3.40.1280.10">
    <property type="match status" value="1"/>
</dbReference>
<dbReference type="HAMAP" id="MF_00658">
    <property type="entry name" value="23SrRNA_methyltr_H"/>
    <property type="match status" value="1"/>
</dbReference>
<dbReference type="InterPro" id="IPR029028">
    <property type="entry name" value="Alpha/beta_knot_MTases"/>
</dbReference>
<dbReference type="InterPro" id="IPR003742">
    <property type="entry name" value="RlmH-like"/>
</dbReference>
<dbReference type="InterPro" id="IPR029026">
    <property type="entry name" value="tRNA_m1G_MTases_N"/>
</dbReference>
<dbReference type="PANTHER" id="PTHR33603">
    <property type="entry name" value="METHYLTRANSFERASE"/>
    <property type="match status" value="1"/>
</dbReference>
<dbReference type="PANTHER" id="PTHR33603:SF1">
    <property type="entry name" value="RIBOSOMAL RNA LARGE SUBUNIT METHYLTRANSFERASE H"/>
    <property type="match status" value="1"/>
</dbReference>
<dbReference type="Pfam" id="PF02590">
    <property type="entry name" value="SPOUT_MTase"/>
    <property type="match status" value="1"/>
</dbReference>
<dbReference type="PIRSF" id="PIRSF004505">
    <property type="entry name" value="MT_bac"/>
    <property type="match status" value="1"/>
</dbReference>
<dbReference type="SUPFAM" id="SSF75217">
    <property type="entry name" value="alpha/beta knot"/>
    <property type="match status" value="1"/>
</dbReference>
<name>RLMH_SYNSC</name>
<evidence type="ECO:0000255" key="1">
    <source>
        <dbReference type="HAMAP-Rule" id="MF_00658"/>
    </source>
</evidence>
<sequence>MNPARCRILAVGKVRRGWIQDGIDLYLKRLPGLTISELRDSNPDKEADAIRAALRPDETLIALMEQGDTLASVPFAQRLEQFGNQRLAFVIGGADGLTAELKAQAQWRLSLSPMTFPHELARLMLVEQLFRAQAIVQGSPYHRA</sequence>
<proteinExistence type="inferred from homology"/>
<reference key="1">
    <citation type="submission" date="2005-07" db="EMBL/GenBank/DDBJ databases">
        <title>Complete sequence of Synechococcus sp. CC9605.</title>
        <authorList>
            <consortium name="US DOE Joint Genome Institute"/>
            <person name="Copeland A."/>
            <person name="Lucas S."/>
            <person name="Lapidus A."/>
            <person name="Barry K."/>
            <person name="Detter J.C."/>
            <person name="Glavina T."/>
            <person name="Hammon N."/>
            <person name="Israni S."/>
            <person name="Pitluck S."/>
            <person name="Schmutz J."/>
            <person name="Martinez M."/>
            <person name="Larimer F."/>
            <person name="Land M."/>
            <person name="Kyrpides N."/>
            <person name="Ivanova N."/>
            <person name="Richardson P."/>
        </authorList>
    </citation>
    <scope>NUCLEOTIDE SEQUENCE [LARGE SCALE GENOMIC DNA]</scope>
    <source>
        <strain>CC9605</strain>
    </source>
</reference>
<accession>Q3AKE4</accession>
<keyword id="KW-0963">Cytoplasm</keyword>
<keyword id="KW-0489">Methyltransferase</keyword>
<keyword id="KW-0698">rRNA processing</keyword>
<keyword id="KW-0949">S-adenosyl-L-methionine</keyword>
<keyword id="KW-0808">Transferase</keyword>
<organism>
    <name type="scientific">Synechococcus sp. (strain CC9605)</name>
    <dbReference type="NCBI Taxonomy" id="110662"/>
    <lineage>
        <taxon>Bacteria</taxon>
        <taxon>Bacillati</taxon>
        <taxon>Cyanobacteriota</taxon>
        <taxon>Cyanophyceae</taxon>
        <taxon>Synechococcales</taxon>
        <taxon>Synechococcaceae</taxon>
        <taxon>Synechococcus</taxon>
    </lineage>
</organism>
<protein>
    <recommendedName>
        <fullName evidence="1">Ribosomal RNA large subunit methyltransferase H</fullName>
        <ecNumber evidence="1">2.1.1.177</ecNumber>
    </recommendedName>
    <alternativeName>
        <fullName evidence="1">23S rRNA (pseudouridine1915-N3)-methyltransferase</fullName>
    </alternativeName>
    <alternativeName>
        <fullName evidence="1">23S rRNA m3Psi1915 methyltransferase</fullName>
    </alternativeName>
    <alternativeName>
        <fullName evidence="1">rRNA (pseudouridine-N3-)-methyltransferase RlmH</fullName>
    </alternativeName>
</protein>